<feature type="chain" id="PRO_0000325969" description="Transmembrane protein 208">
    <location>
        <begin position="1"/>
        <end position="179"/>
    </location>
</feature>
<feature type="transmembrane region" description="Helical" evidence="2">
    <location>
        <begin position="25"/>
        <end position="45"/>
    </location>
</feature>
<feature type="transmembrane region" description="Helical" evidence="2">
    <location>
        <begin position="51"/>
        <end position="68"/>
    </location>
</feature>
<feature type="transmembrane region" description="Helical" evidence="2">
    <location>
        <begin position="114"/>
        <end position="136"/>
    </location>
</feature>
<feature type="region of interest" description="Disordered" evidence="3">
    <location>
        <begin position="159"/>
        <end position="179"/>
    </location>
</feature>
<dbReference type="EMBL" id="AJ720252">
    <property type="protein sequence ID" value="CAG31911.1"/>
    <property type="molecule type" value="mRNA"/>
</dbReference>
<dbReference type="FunCoup" id="Q5ZK32">
    <property type="interactions" value="308"/>
</dbReference>
<dbReference type="STRING" id="9031.ENSGALP00000053597"/>
<dbReference type="VEuPathDB" id="HostDB:geneid_100857564"/>
<dbReference type="InParanoid" id="Q5ZK32"/>
<dbReference type="OrthoDB" id="10012212at2759"/>
<dbReference type="PhylomeDB" id="Q5ZK32"/>
<dbReference type="PRO" id="PR:Q5ZK32"/>
<dbReference type="Proteomes" id="UP000000539">
    <property type="component" value="Unassembled WGS sequence"/>
</dbReference>
<dbReference type="GO" id="GO:0005789">
    <property type="term" value="C:endoplasmic reticulum membrane"/>
    <property type="evidence" value="ECO:0000250"/>
    <property type="project" value="UniProtKB"/>
</dbReference>
<dbReference type="GO" id="GO:0043231">
    <property type="term" value="C:intracellular membrane-bounded organelle"/>
    <property type="evidence" value="ECO:0000318"/>
    <property type="project" value="GO_Central"/>
</dbReference>
<dbReference type="GO" id="GO:0005773">
    <property type="term" value="C:vacuole"/>
    <property type="evidence" value="ECO:0007669"/>
    <property type="project" value="GOC"/>
</dbReference>
<dbReference type="GO" id="GO:0006914">
    <property type="term" value="P:autophagy"/>
    <property type="evidence" value="ECO:0007669"/>
    <property type="project" value="UniProtKB-KW"/>
</dbReference>
<dbReference type="GO" id="GO:0006624">
    <property type="term" value="P:vacuolar protein processing"/>
    <property type="evidence" value="ECO:0000318"/>
    <property type="project" value="GO_Central"/>
</dbReference>
<dbReference type="InterPro" id="IPR008506">
    <property type="entry name" value="SND2/TMEM208"/>
</dbReference>
<dbReference type="PANTHER" id="PTHR13505">
    <property type="entry name" value="TRANSMEMBRANE PROTEIN 208"/>
    <property type="match status" value="1"/>
</dbReference>
<dbReference type="PANTHER" id="PTHR13505:SF7">
    <property type="entry name" value="TRANSMEMBRANE PROTEIN 208"/>
    <property type="match status" value="1"/>
</dbReference>
<dbReference type="Pfam" id="PF05620">
    <property type="entry name" value="TMEM208_SND2"/>
    <property type="match status" value="1"/>
</dbReference>
<gene>
    <name type="primary">TMEM208</name>
    <name type="ORF">RCJMB04_13i12</name>
</gene>
<name>TM208_CHICK</name>
<organism>
    <name type="scientific">Gallus gallus</name>
    <name type="common">Chicken</name>
    <dbReference type="NCBI Taxonomy" id="9031"/>
    <lineage>
        <taxon>Eukaryota</taxon>
        <taxon>Metazoa</taxon>
        <taxon>Chordata</taxon>
        <taxon>Craniata</taxon>
        <taxon>Vertebrata</taxon>
        <taxon>Euteleostomi</taxon>
        <taxon>Archelosauria</taxon>
        <taxon>Archosauria</taxon>
        <taxon>Dinosauria</taxon>
        <taxon>Saurischia</taxon>
        <taxon>Theropoda</taxon>
        <taxon>Coelurosauria</taxon>
        <taxon>Aves</taxon>
        <taxon>Neognathae</taxon>
        <taxon>Galloanserae</taxon>
        <taxon>Galliformes</taxon>
        <taxon>Phasianidae</taxon>
        <taxon>Phasianinae</taxon>
        <taxon>Gallus</taxon>
    </lineage>
</organism>
<protein>
    <recommendedName>
        <fullName>Transmembrane protein 208</fullName>
    </recommendedName>
</protein>
<proteinExistence type="evidence at transcript level"/>
<evidence type="ECO:0000250" key="1">
    <source>
        <dbReference type="UniProtKB" id="Q9BTX3"/>
    </source>
</evidence>
<evidence type="ECO:0000255" key="2"/>
<evidence type="ECO:0000256" key="3">
    <source>
        <dbReference type="SAM" id="MobiDB-lite"/>
    </source>
</evidence>
<evidence type="ECO:0000305" key="4"/>
<reference key="1">
    <citation type="journal article" date="2005" name="Genome Biol.">
        <title>Full-length cDNAs from chicken bursal lymphocytes to facilitate gene function analysis.</title>
        <authorList>
            <person name="Caldwell R.B."/>
            <person name="Kierzek A.M."/>
            <person name="Arakawa H."/>
            <person name="Bezzubov Y."/>
            <person name="Zaim J."/>
            <person name="Fiedler P."/>
            <person name="Kutter S."/>
            <person name="Blagodatski A."/>
            <person name="Kostovska D."/>
            <person name="Koter M."/>
            <person name="Plachy J."/>
            <person name="Carninci P."/>
            <person name="Hayashizaki Y."/>
            <person name="Buerstedde J.-M."/>
        </authorList>
    </citation>
    <scope>NUCLEOTIDE SEQUENCE [LARGE SCALE MRNA]</scope>
    <source>
        <strain>CB</strain>
        <tissue>Bursa of Fabricius</tissue>
    </source>
</reference>
<comment type="function">
    <text evidence="1">May function as a negative regulator of endoplasmic reticulum-stress induced autophagy.</text>
</comment>
<comment type="subcellular location">
    <subcellularLocation>
        <location evidence="1">Endoplasmic reticulum membrane</location>
        <topology evidence="2">Multi-pass membrane protein</topology>
    </subcellularLocation>
</comment>
<comment type="similarity">
    <text evidence="4">Belongs to the TMEM208 family.</text>
</comment>
<keyword id="KW-0072">Autophagy</keyword>
<keyword id="KW-0256">Endoplasmic reticulum</keyword>
<keyword id="KW-0472">Membrane</keyword>
<keyword id="KW-1185">Reference proteome</keyword>
<keyword id="KW-0812">Transmembrane</keyword>
<keyword id="KW-1133">Transmembrane helix</keyword>
<accession>Q5ZK32</accession>
<sequence>MAPKGKAGTKGKKQIFEENRETLRFYLRIILGASAVYAAVNLVVFYPAASAWTWLAFAFSSAVYGASYRSMSSMARPAFADDGSLADGGIDLNMEQGWQSECPHPHEPRHLKDVILLTAMVQVLSCFSLYVWYFWLLAPGRALYLLWVNILGPWFTAESSAPGQEPNEKKQRRTGTPPE</sequence>